<gene>
    <name evidence="2" type="primary">polC</name>
    <name type="ordered locus">Mbar_A0899</name>
</gene>
<evidence type="ECO:0000250" key="1"/>
<evidence type="ECO:0000255" key="2">
    <source>
        <dbReference type="HAMAP-Rule" id="MF_00324"/>
    </source>
</evidence>
<feature type="chain" id="PRO_0000294692" description="DNA polymerase II large subunit">
    <location>
        <begin position="1"/>
        <end position="1146"/>
    </location>
</feature>
<dbReference type="EC" id="2.7.7.7" evidence="2"/>
<dbReference type="EC" id="3.1.11.1" evidence="2"/>
<dbReference type="EMBL" id="CP000099">
    <property type="protein sequence ID" value="AAZ69873.1"/>
    <property type="molecule type" value="Genomic_DNA"/>
</dbReference>
<dbReference type="SMR" id="Q46E19"/>
<dbReference type="STRING" id="269797.Mbar_A0899"/>
<dbReference type="PaxDb" id="269797-Mbar_A0899"/>
<dbReference type="KEGG" id="mba:Mbar_A0899"/>
<dbReference type="eggNOG" id="arCOG04447">
    <property type="taxonomic scope" value="Archaea"/>
</dbReference>
<dbReference type="HOGENOM" id="CLU_001154_0_0_2"/>
<dbReference type="OrthoDB" id="7529at2157"/>
<dbReference type="GO" id="GO:0003677">
    <property type="term" value="F:DNA binding"/>
    <property type="evidence" value="ECO:0007669"/>
    <property type="project" value="UniProtKB-UniRule"/>
</dbReference>
<dbReference type="GO" id="GO:0003887">
    <property type="term" value="F:DNA-directed DNA polymerase activity"/>
    <property type="evidence" value="ECO:0007669"/>
    <property type="project" value="UniProtKB-UniRule"/>
</dbReference>
<dbReference type="GO" id="GO:0008310">
    <property type="term" value="F:single-stranded DNA 3'-5' DNA exonuclease activity"/>
    <property type="evidence" value="ECO:0007669"/>
    <property type="project" value="UniProtKB-EC"/>
</dbReference>
<dbReference type="GO" id="GO:0006308">
    <property type="term" value="P:DNA catabolic process"/>
    <property type="evidence" value="ECO:0007669"/>
    <property type="project" value="UniProtKB-UniRule"/>
</dbReference>
<dbReference type="GO" id="GO:0006261">
    <property type="term" value="P:DNA-templated DNA replication"/>
    <property type="evidence" value="ECO:0007669"/>
    <property type="project" value="UniProtKB-UniRule"/>
</dbReference>
<dbReference type="HAMAP" id="MF_00324">
    <property type="entry name" value="DNApol_II_L_arch"/>
    <property type="match status" value="1"/>
</dbReference>
<dbReference type="InterPro" id="IPR004475">
    <property type="entry name" value="PolC_DP2"/>
</dbReference>
<dbReference type="InterPro" id="IPR056172">
    <property type="entry name" value="PolC_DP2_cat_dom"/>
</dbReference>
<dbReference type="InterPro" id="IPR056171">
    <property type="entry name" value="PolC_DP2_central_dom"/>
</dbReference>
<dbReference type="InterPro" id="IPR016033">
    <property type="entry name" value="PolC_DP2_N"/>
</dbReference>
<dbReference type="NCBIfam" id="TIGR00354">
    <property type="entry name" value="polC"/>
    <property type="match status" value="1"/>
</dbReference>
<dbReference type="NCBIfam" id="NF003103">
    <property type="entry name" value="PRK04023.1"/>
    <property type="match status" value="1"/>
</dbReference>
<dbReference type="PANTHER" id="PTHR42210">
    <property type="entry name" value="DNA POLYMERASE II LARGE SUBUNIT"/>
    <property type="match status" value="1"/>
</dbReference>
<dbReference type="PANTHER" id="PTHR42210:SF1">
    <property type="entry name" value="DNA POLYMERASE II LARGE SUBUNIT"/>
    <property type="match status" value="1"/>
</dbReference>
<dbReference type="Pfam" id="PF24846">
    <property type="entry name" value="PolC_DP2_cat"/>
    <property type="match status" value="1"/>
</dbReference>
<dbReference type="Pfam" id="PF24844">
    <property type="entry name" value="PolC_DP2_central"/>
    <property type="match status" value="1"/>
</dbReference>
<dbReference type="Pfam" id="PF03833">
    <property type="entry name" value="PolC_DP2_N"/>
    <property type="match status" value="1"/>
</dbReference>
<dbReference type="PIRSF" id="PIRSF016275">
    <property type="entry name" value="PolC_DP2"/>
    <property type="match status" value="1"/>
</dbReference>
<comment type="function">
    <text evidence="1">Possesses two activities: a DNA synthesis (polymerase) and an exonucleolytic activity that degrades single-stranded DNA in the 3'- to 5'-direction. Has a template-primer preference which is characteristic of a replicative DNA polymerase (By similarity).</text>
</comment>
<comment type="catalytic activity">
    <reaction evidence="2">
        <text>DNA(n) + a 2'-deoxyribonucleoside 5'-triphosphate = DNA(n+1) + diphosphate</text>
        <dbReference type="Rhea" id="RHEA:22508"/>
        <dbReference type="Rhea" id="RHEA-COMP:17339"/>
        <dbReference type="Rhea" id="RHEA-COMP:17340"/>
        <dbReference type="ChEBI" id="CHEBI:33019"/>
        <dbReference type="ChEBI" id="CHEBI:61560"/>
        <dbReference type="ChEBI" id="CHEBI:173112"/>
        <dbReference type="EC" id="2.7.7.7"/>
    </reaction>
</comment>
<comment type="catalytic activity">
    <reaction evidence="2">
        <text>Exonucleolytic cleavage in the 3'- to 5'-direction to yield nucleoside 5'-phosphates.</text>
        <dbReference type="EC" id="3.1.11.1"/>
    </reaction>
</comment>
<comment type="subunit">
    <text evidence="2">Heterodimer of a large subunit and a small subunit.</text>
</comment>
<comment type="similarity">
    <text evidence="2">Belongs to the archaeal DNA polymerase II family.</text>
</comment>
<organism>
    <name type="scientific">Methanosarcina barkeri (strain Fusaro / DSM 804)</name>
    <dbReference type="NCBI Taxonomy" id="269797"/>
    <lineage>
        <taxon>Archaea</taxon>
        <taxon>Methanobacteriati</taxon>
        <taxon>Methanobacteriota</taxon>
        <taxon>Stenosarchaea group</taxon>
        <taxon>Methanomicrobia</taxon>
        <taxon>Methanosarcinales</taxon>
        <taxon>Methanosarcinaceae</taxon>
        <taxon>Methanosarcina</taxon>
    </lineage>
</organism>
<protein>
    <recommendedName>
        <fullName evidence="2">DNA polymerase II large subunit</fullName>
        <shortName evidence="2">Pol II</shortName>
        <ecNumber evidence="2">2.7.7.7</ecNumber>
    </recommendedName>
    <alternativeName>
        <fullName evidence="2">Exodeoxyribonuclease large subunit</fullName>
        <ecNumber evidence="2">3.1.11.1</ecNumber>
    </alternativeName>
</protein>
<accession>Q46E19</accession>
<name>DP2L_METBF</name>
<reference key="1">
    <citation type="journal article" date="2006" name="J. Bacteriol.">
        <title>The Methanosarcina barkeri genome: comparative analysis with Methanosarcina acetivorans and Methanosarcina mazei reveals extensive rearrangement within methanosarcinal genomes.</title>
        <authorList>
            <person name="Maeder D.L."/>
            <person name="Anderson I."/>
            <person name="Brettin T.S."/>
            <person name="Bruce D.C."/>
            <person name="Gilna P."/>
            <person name="Han C.S."/>
            <person name="Lapidus A."/>
            <person name="Metcalf W.W."/>
            <person name="Saunders E."/>
            <person name="Tapia R."/>
            <person name="Sowers K.R."/>
        </authorList>
    </citation>
    <scope>NUCLEOTIDE SEQUENCE [LARGE SCALE GENOMIC DNA]</scope>
    <source>
        <strain>Fusaro / DSM 804</strain>
    </source>
</reference>
<sequence length="1146" mass="128094">MGETIASKEMHEYFDELEARLKKAIEIANTARARGGDPKPVVEIPLAKDLADRVENLIGVEGVAAKIRVLEEKMSREECALEIGRQVAEGEVGNFATKKDAVEAAIRVSMAVITEGVVAAPIEGINKVELGKNDDGSEYIRIFYSGPIRSAGGTAQALSVLVGDYVRRGIGIDRYKPRPEEVERYVEEIVLYKRVASLQYMPSEDEIRLIVKNCPVCIDGDPTEEAEVEGHRNLERIGTNRIRGGMCLVLAEGLALKAPKVKKHVNKLNMDGWDWLDILIGGAKTGGDEEDEKKNKIKPKDKYIRDLIAGRPVFSHPSRPGGFRLRYGRSRNTSFAAAGINPSTMVLLDDFITNGTQLKVERPGKAAAMSAVDSIEGPTVRLYSGDLVRIDDIKEAYELRSQVEVIVDIGEILINYGDFLENNHPLMPSPYVFEWWRYDYEAACSEIIPEDELKDPSSALALRLAEEYDVPLHPKFTYLWHDINRTEFEALRKFVVGRGNFSVEDEILRLPLKACIENGVKLILEKLLVLHRVKADTILIKEALPFILCLGLDCHLKEKAPMPDTDNMVNATAFLSGFKVLPRAPSRIGARMGRPEKANLRKMSPAAQVLFPIGNAGGLTRNLVSASNYSVSMNGKIGEIEVEMGIRECPACGKETYFWRCDCGEYTRPKLFCPRCKIEVRNSETCPKCGRKPTSVSNVKLDFRSIYKRAFENVGEREKMDLIKGVKRLMNGQMTPEPLEKGILRAKHDVYIFKDGTVRYDMSDIPLTHVRADEIGITAAKLRELGYVEDIYGNPLERDDQIVCLKVQDLVISYDGGGYMLRTAQYVDDLLVKYYGVEPYYNAKTIQDLVGVLLIGLAPHTSAGVLGRLIGFTRASVGYAHPFFHASKRRNCDGDEDCVMLLMDGILNFSRAYLPEKRGGKMDAPLVLTTRIDPKEVDKEAHNIDLPARYPLEFYRATQEIKNPTELEGIMDLVSSRLGTPEQYEHFMFTHDTSDIAAGPLNSSYKTLGSMIDKMEAQLSLANKIRAVDAPDVAERVLKSHFLPDLLGNLRSFSRQRMRCIKCGAKFRRPPLTGACPKCGGNVVLTVHEGAVRKYLEISKEIGKRYGVSSYTQQRIELLDKDICSLFENHRVKQLGISDFMSGSAR</sequence>
<keyword id="KW-0235">DNA replication</keyword>
<keyword id="KW-0238">DNA-binding</keyword>
<keyword id="KW-0239">DNA-directed DNA polymerase</keyword>
<keyword id="KW-0269">Exonuclease</keyword>
<keyword id="KW-0378">Hydrolase</keyword>
<keyword id="KW-0511">Multifunctional enzyme</keyword>
<keyword id="KW-0540">Nuclease</keyword>
<keyword id="KW-0548">Nucleotidyltransferase</keyword>
<keyword id="KW-0808">Transferase</keyword>
<proteinExistence type="inferred from homology"/>